<name>PDXK_STAEQ</name>
<accession>Q5HRG7</accession>
<keyword id="KW-0067">ATP-binding</keyword>
<keyword id="KW-0418">Kinase</keyword>
<keyword id="KW-0460">Magnesium</keyword>
<keyword id="KW-0479">Metal-binding</keyword>
<keyword id="KW-0547">Nucleotide-binding</keyword>
<keyword id="KW-1185">Reference proteome</keyword>
<keyword id="KW-0808">Transferase</keyword>
<dbReference type="EC" id="2.7.1.35"/>
<dbReference type="EMBL" id="CP000029">
    <property type="protein sequence ID" value="AAW53606.1"/>
    <property type="molecule type" value="Genomic_DNA"/>
</dbReference>
<dbReference type="SMR" id="Q5HRG7"/>
<dbReference type="STRING" id="176279.SERP0226"/>
<dbReference type="KEGG" id="ser:SERP0226"/>
<dbReference type="eggNOG" id="COG0351">
    <property type="taxonomic scope" value="Bacteria"/>
</dbReference>
<dbReference type="HOGENOM" id="CLU_020520_0_0_9"/>
<dbReference type="Proteomes" id="UP000000531">
    <property type="component" value="Chromosome"/>
</dbReference>
<dbReference type="GO" id="GO:0005829">
    <property type="term" value="C:cytosol"/>
    <property type="evidence" value="ECO:0007669"/>
    <property type="project" value="TreeGrafter"/>
</dbReference>
<dbReference type="GO" id="GO:0005524">
    <property type="term" value="F:ATP binding"/>
    <property type="evidence" value="ECO:0007669"/>
    <property type="project" value="UniProtKB-KW"/>
</dbReference>
<dbReference type="GO" id="GO:0008902">
    <property type="term" value="F:hydroxymethylpyrimidine kinase activity"/>
    <property type="evidence" value="ECO:0007669"/>
    <property type="project" value="TreeGrafter"/>
</dbReference>
<dbReference type="GO" id="GO:0046872">
    <property type="term" value="F:metal ion binding"/>
    <property type="evidence" value="ECO:0007669"/>
    <property type="project" value="UniProtKB-KW"/>
</dbReference>
<dbReference type="GO" id="GO:0008972">
    <property type="term" value="F:phosphomethylpyrimidine kinase activity"/>
    <property type="evidence" value="ECO:0007669"/>
    <property type="project" value="InterPro"/>
</dbReference>
<dbReference type="GO" id="GO:0008478">
    <property type="term" value="F:pyridoxal kinase activity"/>
    <property type="evidence" value="ECO:0007669"/>
    <property type="project" value="UniProtKB-EC"/>
</dbReference>
<dbReference type="GO" id="GO:0009228">
    <property type="term" value="P:thiamine biosynthetic process"/>
    <property type="evidence" value="ECO:0007669"/>
    <property type="project" value="InterPro"/>
</dbReference>
<dbReference type="CDD" id="cd01169">
    <property type="entry name" value="HMPP_kinase"/>
    <property type="match status" value="1"/>
</dbReference>
<dbReference type="FunFam" id="3.40.1190.20:FF:000003">
    <property type="entry name" value="Phosphomethylpyrimidine kinase ThiD"/>
    <property type="match status" value="1"/>
</dbReference>
<dbReference type="Gene3D" id="3.40.1190.20">
    <property type="match status" value="1"/>
</dbReference>
<dbReference type="InterPro" id="IPR004399">
    <property type="entry name" value="HMP/HMP-P_kinase_dom"/>
</dbReference>
<dbReference type="InterPro" id="IPR013749">
    <property type="entry name" value="PM/HMP-P_kinase-1"/>
</dbReference>
<dbReference type="InterPro" id="IPR029056">
    <property type="entry name" value="Ribokinase-like"/>
</dbReference>
<dbReference type="NCBIfam" id="TIGR00097">
    <property type="entry name" value="HMP-P_kinase"/>
    <property type="match status" value="1"/>
</dbReference>
<dbReference type="PANTHER" id="PTHR20858">
    <property type="entry name" value="PHOSPHOMETHYLPYRIMIDINE KINASE"/>
    <property type="match status" value="1"/>
</dbReference>
<dbReference type="PANTHER" id="PTHR20858:SF19">
    <property type="entry name" value="PYRIDOXINE KINASE"/>
    <property type="match status" value="1"/>
</dbReference>
<dbReference type="Pfam" id="PF08543">
    <property type="entry name" value="Phos_pyr_kin"/>
    <property type="match status" value="1"/>
</dbReference>
<dbReference type="SUPFAM" id="SSF53613">
    <property type="entry name" value="Ribokinase-like"/>
    <property type="match status" value="1"/>
</dbReference>
<reference key="1">
    <citation type="journal article" date="2005" name="J. Bacteriol.">
        <title>Insights on evolution of virulence and resistance from the complete genome analysis of an early methicillin-resistant Staphylococcus aureus strain and a biofilm-producing methicillin-resistant Staphylococcus epidermidis strain.</title>
        <authorList>
            <person name="Gill S.R."/>
            <person name="Fouts D.E."/>
            <person name="Archer G.L."/>
            <person name="Mongodin E.F."/>
            <person name="DeBoy R.T."/>
            <person name="Ravel J."/>
            <person name="Paulsen I.T."/>
            <person name="Kolonay J.F."/>
            <person name="Brinkac L.M."/>
            <person name="Beanan M.J."/>
            <person name="Dodson R.J."/>
            <person name="Daugherty S.C."/>
            <person name="Madupu R."/>
            <person name="Angiuoli S.V."/>
            <person name="Durkin A.S."/>
            <person name="Haft D.H."/>
            <person name="Vamathevan J.J."/>
            <person name="Khouri H."/>
            <person name="Utterback T.R."/>
            <person name="Lee C."/>
            <person name="Dimitrov G."/>
            <person name="Jiang L."/>
            <person name="Qin H."/>
            <person name="Weidman J."/>
            <person name="Tran K."/>
            <person name="Kang K.H."/>
            <person name="Hance I.R."/>
            <person name="Nelson K.E."/>
            <person name="Fraser C.M."/>
        </authorList>
    </citation>
    <scope>NUCLEOTIDE SEQUENCE [LARGE SCALE GENOMIC DNA]</scope>
    <source>
        <strain>ATCC 35984 / DSM 28319 / BCRC 17069 / CCUG 31568 / BM 3577 / RP62A</strain>
    </source>
</reference>
<sequence length="276" mass="29858">MALKKVLTIAGSDTSAGAGMQADLKTFQELDVYGMVALTSIVTMDKETWSHDVTPIDMNIFEKQLETAISIGPNAIKTGMLGTQDIIKRAGDVFVESGADYFVVDPVMVCKGEDEVLNPGNTEAMIQYLLPKATVVTPNLFEAGQLSGLGKLTSIEDMKKAAQVIYDKGTPHVIIKGGKALDQDKSYDLYYDGQQFYQLTTDMFQQSYNHGAGCTFAAATTAYLANGKSPKEAIIAAKAFVASAIKNGWKMNDFVGPVDHGAYNRIEQINVEVTEV</sequence>
<organism>
    <name type="scientific">Staphylococcus epidermidis (strain ATCC 35984 / DSM 28319 / BCRC 17069 / CCUG 31568 / BM 3577 / RP62A)</name>
    <dbReference type="NCBI Taxonomy" id="176279"/>
    <lineage>
        <taxon>Bacteria</taxon>
        <taxon>Bacillati</taxon>
        <taxon>Bacillota</taxon>
        <taxon>Bacilli</taxon>
        <taxon>Bacillales</taxon>
        <taxon>Staphylococcaceae</taxon>
        <taxon>Staphylococcus</taxon>
    </lineage>
</organism>
<evidence type="ECO:0000250" key="1"/>
<evidence type="ECO:0000305" key="2"/>
<comment type="function">
    <text evidence="1">Phosphorylates B6 vitamers; functions in a salvage pathway. Uses pyridoxal, pyridoxine, and pyridoxamine as substrates (By similarity).</text>
</comment>
<comment type="catalytic activity">
    <reaction>
        <text>pyridoxal + ATP = pyridoxal 5'-phosphate + ADP + H(+)</text>
        <dbReference type="Rhea" id="RHEA:10224"/>
        <dbReference type="ChEBI" id="CHEBI:15378"/>
        <dbReference type="ChEBI" id="CHEBI:17310"/>
        <dbReference type="ChEBI" id="CHEBI:30616"/>
        <dbReference type="ChEBI" id="CHEBI:456216"/>
        <dbReference type="ChEBI" id="CHEBI:597326"/>
        <dbReference type="EC" id="2.7.1.35"/>
    </reaction>
</comment>
<comment type="similarity">
    <text evidence="2">Belongs to the ThiD family.</text>
</comment>
<proteinExistence type="inferred from homology"/>
<gene>
    <name type="primary">pdxK</name>
    <name type="ordered locus">SERP0226</name>
</gene>
<protein>
    <recommendedName>
        <fullName>Putative pyridoxine kinase</fullName>
        <ecNumber>2.7.1.35</ecNumber>
    </recommendedName>
    <alternativeName>
        <fullName>PN/PL/PM kinase</fullName>
    </alternativeName>
    <alternativeName>
        <fullName>Pyridoxal kinase</fullName>
    </alternativeName>
    <alternativeName>
        <fullName>Pyridoxamine kinase</fullName>
    </alternativeName>
    <alternativeName>
        <fullName>Vitamin B6 kinase</fullName>
    </alternativeName>
</protein>
<feature type="chain" id="PRO_0000192034" description="Putative pyridoxine kinase">
    <location>
        <begin position="1"/>
        <end position="276"/>
    </location>
</feature>
<feature type="binding site" evidence="1">
    <location>
        <position position="139"/>
    </location>
    <ligand>
        <name>ATP</name>
        <dbReference type="ChEBI" id="CHEBI:30616"/>
    </ligand>
</feature>
<feature type="binding site" evidence="1">
    <location>
        <position position="142"/>
    </location>
    <ligand>
        <name>Mg(2+)</name>
        <dbReference type="ChEBI" id="CHEBI:18420"/>
    </ligand>
</feature>
<feature type="binding site" evidence="1">
    <location>
        <begin position="176"/>
        <end position="180"/>
    </location>
    <ligand>
        <name>ATP</name>
        <dbReference type="ChEBI" id="CHEBI:30616"/>
    </ligand>
</feature>
<feature type="binding site" evidence="1">
    <location>
        <position position="188"/>
    </location>
    <ligand>
        <name>ATP</name>
        <dbReference type="ChEBI" id="CHEBI:30616"/>
    </ligand>
</feature>
<feature type="binding site" evidence="1">
    <location>
        <position position="213"/>
    </location>
    <ligand>
        <name>ATP</name>
        <dbReference type="ChEBI" id="CHEBI:30616"/>
    </ligand>
</feature>
<feature type="binding site" evidence="1">
    <location>
        <position position="238"/>
    </location>
    <ligand>
        <name>ATP</name>
        <dbReference type="ChEBI" id="CHEBI:30616"/>
    </ligand>
</feature>